<keyword id="KW-0067">ATP-binding</keyword>
<keyword id="KW-0997">Cell inner membrane</keyword>
<keyword id="KW-1003">Cell membrane</keyword>
<keyword id="KW-0963">Cytoplasm</keyword>
<keyword id="KW-0472">Membrane</keyword>
<keyword id="KW-0479">Metal-binding</keyword>
<keyword id="KW-0547">Nucleotide-binding</keyword>
<keyword id="KW-0653">Protein transport</keyword>
<keyword id="KW-1278">Translocase</keyword>
<keyword id="KW-0811">Translocation</keyword>
<keyword id="KW-0813">Transport</keyword>
<keyword id="KW-0862">Zinc</keyword>
<reference key="1">
    <citation type="submission" date="2006-11" db="EMBL/GenBank/DDBJ databases">
        <title>Identification and characterization of a new conjugation/ type IVA secretion system (trb/tra) of L. pneumophila Corby localized on a mobile genomic island.</title>
        <authorList>
            <person name="Gloeckner G."/>
            <person name="Albert-Weissenberger C."/>
            <person name="Weinmann E."/>
            <person name="Jacobi S."/>
            <person name="Schunder E."/>
            <person name="Steinert M."/>
            <person name="Buchrieser C."/>
            <person name="Hacker J."/>
            <person name="Heuner K."/>
        </authorList>
    </citation>
    <scope>NUCLEOTIDE SEQUENCE [LARGE SCALE GENOMIC DNA]</scope>
    <source>
        <strain>Corby</strain>
    </source>
</reference>
<feature type="chain" id="PRO_0000320839" description="Protein translocase subunit SecA">
    <location>
        <begin position="1"/>
        <end position="896"/>
    </location>
</feature>
<feature type="region of interest" description="Disordered" evidence="2">
    <location>
        <begin position="853"/>
        <end position="879"/>
    </location>
</feature>
<feature type="compositionally biased region" description="Basic and acidic residues" evidence="2">
    <location>
        <begin position="866"/>
        <end position="876"/>
    </location>
</feature>
<feature type="binding site" evidence="1">
    <location>
        <position position="87"/>
    </location>
    <ligand>
        <name>ATP</name>
        <dbReference type="ChEBI" id="CHEBI:30616"/>
    </ligand>
</feature>
<feature type="binding site" evidence="1">
    <location>
        <begin position="105"/>
        <end position="109"/>
    </location>
    <ligand>
        <name>ATP</name>
        <dbReference type="ChEBI" id="CHEBI:30616"/>
    </ligand>
</feature>
<feature type="binding site" evidence="1">
    <location>
        <position position="507"/>
    </location>
    <ligand>
        <name>ATP</name>
        <dbReference type="ChEBI" id="CHEBI:30616"/>
    </ligand>
</feature>
<feature type="binding site" evidence="1">
    <location>
        <position position="880"/>
    </location>
    <ligand>
        <name>Zn(2+)</name>
        <dbReference type="ChEBI" id="CHEBI:29105"/>
    </ligand>
</feature>
<feature type="binding site" evidence="1">
    <location>
        <position position="882"/>
    </location>
    <ligand>
        <name>Zn(2+)</name>
        <dbReference type="ChEBI" id="CHEBI:29105"/>
    </ligand>
</feature>
<feature type="binding site" evidence="1">
    <location>
        <position position="891"/>
    </location>
    <ligand>
        <name>Zn(2+)</name>
        <dbReference type="ChEBI" id="CHEBI:29105"/>
    </ligand>
</feature>
<feature type="binding site" evidence="1">
    <location>
        <position position="892"/>
    </location>
    <ligand>
        <name>Zn(2+)</name>
        <dbReference type="ChEBI" id="CHEBI:29105"/>
    </ligand>
</feature>
<sequence>MLSTLIKKMFGSRNERTLRRMEKSVMAINAFEPKMQALSNEELAGKTQEFKERFNNGESLDELLAEAFATVREVSLRTLGLRHFDVQLIGGMVLHEGNIAEMRTGEGKTLVATLPAYLNAISGRGVHIVTVNDYLAKRDSQWMKPIYEFLGLTVGVIYPDMSHKEKQEAYKADIVYGTNNEYGFDYLRDNMAFSLTDKVQRELNFAIVDEVDSILIDEARTPLIISGAAEDSSELYIKINSLIPQLKKQEEEGDEGDYTIDEKQKQAHLTDAGHLHIEELLTKAKLLDPGESLYHASNIMLMHHVNAALKAHAMFHRDIDYIVKDNQVVIVDEHTGRTMPGRRWSEGLHQAVEAKEGVPIQNENQTLASITFQNFFRMYNKLSGMTGTADTEAYEFQQIYNLEVVVIPTNRSMIRKDEADLVYLTQADKFQAIIEDVRECGVRKQPVLVGTVSIEASEFLSQLLKKENIKHQVLNAKFHEKEAQIIAEAGRPGAVTIATNMAGRGTDIVLGGSLAADLANLPADASEQEKEAVKKEWQKRHDEVIAAGGLRIIGSERHESRRIDNQLRGRAGRQGDPGSSRFYLSLEDNLMRIFASERVASMMRRLGMQPGEPIEHSLVTRAIENAQRKLEGHHFDVRKQLLDYDNVANDQRQVIYTQRASIMAMTDTQEVVEMMREEVMNSLVDTYIPPQSLEDQWDPQALSDVLSDEFKIKAPVPDWIDKDHSIQPDQIKEKVLALAIEHYDEKVRKVGRPVISQFEKSIILQTLDNHWREHLAAMDQLRQGIHLRGYAQKDPKQEYKKEAFSLFTMMLDNLKYEVIRILSSVEIQTEEDAQVVEEQRRADQIRKMNLMHESLSENDEASETQTFRRQEKKIGRNDPCPCGSGKKYKACHGSLV</sequence>
<comment type="function">
    <text evidence="1">Part of the Sec protein translocase complex. Interacts with the SecYEG preprotein conducting channel. Has a central role in coupling the hydrolysis of ATP to the transfer of proteins into and across the cell membrane, serving both as a receptor for the preprotein-SecB complex and as an ATP-driven molecular motor driving the stepwise translocation of polypeptide chains across the membrane.</text>
</comment>
<comment type="catalytic activity">
    <reaction evidence="1">
        <text>ATP + H2O + cellular proteinSide 1 = ADP + phosphate + cellular proteinSide 2.</text>
        <dbReference type="EC" id="7.4.2.8"/>
    </reaction>
</comment>
<comment type="cofactor">
    <cofactor evidence="1">
        <name>Zn(2+)</name>
        <dbReference type="ChEBI" id="CHEBI:29105"/>
    </cofactor>
    <text evidence="1">May bind 1 zinc ion per subunit.</text>
</comment>
<comment type="subunit">
    <text evidence="1">Monomer and homodimer. Part of the essential Sec protein translocation apparatus which comprises SecA, SecYEG and auxiliary proteins SecDF-YajC and YidC.</text>
</comment>
<comment type="subcellular location">
    <subcellularLocation>
        <location evidence="1">Cell inner membrane</location>
        <topology evidence="1">Peripheral membrane protein</topology>
        <orientation evidence="1">Cytoplasmic side</orientation>
    </subcellularLocation>
    <subcellularLocation>
        <location evidence="1">Cytoplasm</location>
    </subcellularLocation>
    <text evidence="1">Distribution is 50-50.</text>
</comment>
<comment type="similarity">
    <text evidence="1">Belongs to the SecA family.</text>
</comment>
<comment type="sequence caution" evidence="3">
    <conflict type="erroneous initiation">
        <sequence resource="EMBL-CDS" id="ABQ54854"/>
    </conflict>
    <text>Truncated N-terminus.</text>
</comment>
<proteinExistence type="inferred from homology"/>
<dbReference type="EC" id="7.4.2.8" evidence="1"/>
<dbReference type="EMBL" id="CP000675">
    <property type="protein sequence ID" value="ABQ54854.1"/>
    <property type="status" value="ALT_INIT"/>
    <property type="molecule type" value="Genomic_DNA"/>
</dbReference>
<dbReference type="RefSeq" id="WP_013101458.1">
    <property type="nucleotide sequence ID" value="NC_009494.2"/>
</dbReference>
<dbReference type="SMR" id="A5IBV4"/>
<dbReference type="KEGG" id="lpc:LPC_0878"/>
<dbReference type="HOGENOM" id="CLU_005314_3_0_6"/>
<dbReference type="GO" id="GO:0031522">
    <property type="term" value="C:cell envelope Sec protein transport complex"/>
    <property type="evidence" value="ECO:0007669"/>
    <property type="project" value="TreeGrafter"/>
</dbReference>
<dbReference type="GO" id="GO:0005829">
    <property type="term" value="C:cytosol"/>
    <property type="evidence" value="ECO:0007669"/>
    <property type="project" value="TreeGrafter"/>
</dbReference>
<dbReference type="GO" id="GO:0005886">
    <property type="term" value="C:plasma membrane"/>
    <property type="evidence" value="ECO:0007669"/>
    <property type="project" value="UniProtKB-SubCell"/>
</dbReference>
<dbReference type="GO" id="GO:0005524">
    <property type="term" value="F:ATP binding"/>
    <property type="evidence" value="ECO:0007669"/>
    <property type="project" value="UniProtKB-UniRule"/>
</dbReference>
<dbReference type="GO" id="GO:0046872">
    <property type="term" value="F:metal ion binding"/>
    <property type="evidence" value="ECO:0007669"/>
    <property type="project" value="UniProtKB-KW"/>
</dbReference>
<dbReference type="GO" id="GO:0008564">
    <property type="term" value="F:protein-exporting ATPase activity"/>
    <property type="evidence" value="ECO:0007669"/>
    <property type="project" value="UniProtKB-EC"/>
</dbReference>
<dbReference type="GO" id="GO:0065002">
    <property type="term" value="P:intracellular protein transmembrane transport"/>
    <property type="evidence" value="ECO:0007669"/>
    <property type="project" value="UniProtKB-UniRule"/>
</dbReference>
<dbReference type="GO" id="GO:0017038">
    <property type="term" value="P:protein import"/>
    <property type="evidence" value="ECO:0007669"/>
    <property type="project" value="InterPro"/>
</dbReference>
<dbReference type="GO" id="GO:0006605">
    <property type="term" value="P:protein targeting"/>
    <property type="evidence" value="ECO:0007669"/>
    <property type="project" value="UniProtKB-UniRule"/>
</dbReference>
<dbReference type="GO" id="GO:0043952">
    <property type="term" value="P:protein transport by the Sec complex"/>
    <property type="evidence" value="ECO:0007669"/>
    <property type="project" value="TreeGrafter"/>
</dbReference>
<dbReference type="CDD" id="cd17928">
    <property type="entry name" value="DEXDc_SecA"/>
    <property type="match status" value="1"/>
</dbReference>
<dbReference type="CDD" id="cd18803">
    <property type="entry name" value="SF2_C_secA"/>
    <property type="match status" value="1"/>
</dbReference>
<dbReference type="FunFam" id="3.40.50.300:FF:000113">
    <property type="entry name" value="Preprotein translocase subunit SecA"/>
    <property type="match status" value="1"/>
</dbReference>
<dbReference type="FunFam" id="3.90.1440.10:FF:000001">
    <property type="entry name" value="Preprotein translocase subunit SecA"/>
    <property type="match status" value="1"/>
</dbReference>
<dbReference type="FunFam" id="1.10.3060.10:FF:000003">
    <property type="entry name" value="Protein translocase subunit SecA"/>
    <property type="match status" value="1"/>
</dbReference>
<dbReference type="FunFam" id="3.40.50.300:FF:000334">
    <property type="entry name" value="Protein translocase subunit SecA"/>
    <property type="match status" value="1"/>
</dbReference>
<dbReference type="Gene3D" id="1.10.3060.10">
    <property type="entry name" value="Helical scaffold and wing domains of SecA"/>
    <property type="match status" value="1"/>
</dbReference>
<dbReference type="Gene3D" id="3.40.50.300">
    <property type="entry name" value="P-loop containing nucleotide triphosphate hydrolases"/>
    <property type="match status" value="2"/>
</dbReference>
<dbReference type="Gene3D" id="3.90.1440.10">
    <property type="entry name" value="SecA, preprotein cross-linking domain"/>
    <property type="match status" value="1"/>
</dbReference>
<dbReference type="HAMAP" id="MF_01382">
    <property type="entry name" value="SecA"/>
    <property type="match status" value="1"/>
</dbReference>
<dbReference type="InterPro" id="IPR014001">
    <property type="entry name" value="Helicase_ATP-bd"/>
</dbReference>
<dbReference type="InterPro" id="IPR001650">
    <property type="entry name" value="Helicase_C-like"/>
</dbReference>
<dbReference type="InterPro" id="IPR027417">
    <property type="entry name" value="P-loop_NTPase"/>
</dbReference>
<dbReference type="InterPro" id="IPR004027">
    <property type="entry name" value="SEC_C_motif"/>
</dbReference>
<dbReference type="InterPro" id="IPR000185">
    <property type="entry name" value="SecA"/>
</dbReference>
<dbReference type="InterPro" id="IPR020937">
    <property type="entry name" value="SecA_CS"/>
</dbReference>
<dbReference type="InterPro" id="IPR011115">
    <property type="entry name" value="SecA_DEAD"/>
</dbReference>
<dbReference type="InterPro" id="IPR014018">
    <property type="entry name" value="SecA_motor_DEAD"/>
</dbReference>
<dbReference type="InterPro" id="IPR011130">
    <property type="entry name" value="SecA_preprotein_X-link_dom"/>
</dbReference>
<dbReference type="InterPro" id="IPR044722">
    <property type="entry name" value="SecA_SF2_C"/>
</dbReference>
<dbReference type="InterPro" id="IPR011116">
    <property type="entry name" value="SecA_Wing/Scaffold"/>
</dbReference>
<dbReference type="InterPro" id="IPR036266">
    <property type="entry name" value="SecA_Wing/Scaffold_sf"/>
</dbReference>
<dbReference type="InterPro" id="IPR036670">
    <property type="entry name" value="SecA_X-link_sf"/>
</dbReference>
<dbReference type="NCBIfam" id="NF009538">
    <property type="entry name" value="PRK12904.1"/>
    <property type="match status" value="1"/>
</dbReference>
<dbReference type="NCBIfam" id="TIGR00963">
    <property type="entry name" value="secA"/>
    <property type="match status" value="1"/>
</dbReference>
<dbReference type="PANTHER" id="PTHR30612:SF0">
    <property type="entry name" value="CHLOROPLAST PROTEIN-TRANSPORTING ATPASE"/>
    <property type="match status" value="1"/>
</dbReference>
<dbReference type="PANTHER" id="PTHR30612">
    <property type="entry name" value="SECA INNER MEMBRANE COMPONENT OF SEC PROTEIN SECRETION SYSTEM"/>
    <property type="match status" value="1"/>
</dbReference>
<dbReference type="Pfam" id="PF21090">
    <property type="entry name" value="P-loop_SecA"/>
    <property type="match status" value="1"/>
</dbReference>
<dbReference type="Pfam" id="PF02810">
    <property type="entry name" value="SEC-C"/>
    <property type="match status" value="1"/>
</dbReference>
<dbReference type="Pfam" id="PF07517">
    <property type="entry name" value="SecA_DEAD"/>
    <property type="match status" value="1"/>
</dbReference>
<dbReference type="Pfam" id="PF01043">
    <property type="entry name" value="SecA_PP_bind"/>
    <property type="match status" value="1"/>
</dbReference>
<dbReference type="Pfam" id="PF07516">
    <property type="entry name" value="SecA_SW"/>
    <property type="match status" value="1"/>
</dbReference>
<dbReference type="PRINTS" id="PR00906">
    <property type="entry name" value="SECA"/>
</dbReference>
<dbReference type="SMART" id="SM00957">
    <property type="entry name" value="SecA_DEAD"/>
    <property type="match status" value="1"/>
</dbReference>
<dbReference type="SMART" id="SM00958">
    <property type="entry name" value="SecA_PP_bind"/>
    <property type="match status" value="1"/>
</dbReference>
<dbReference type="SUPFAM" id="SSF81886">
    <property type="entry name" value="Helical scaffold and wing domains of SecA"/>
    <property type="match status" value="1"/>
</dbReference>
<dbReference type="SUPFAM" id="SSF52540">
    <property type="entry name" value="P-loop containing nucleoside triphosphate hydrolases"/>
    <property type="match status" value="2"/>
</dbReference>
<dbReference type="SUPFAM" id="SSF81767">
    <property type="entry name" value="Pre-protein crosslinking domain of SecA"/>
    <property type="match status" value="1"/>
</dbReference>
<dbReference type="PROSITE" id="PS01312">
    <property type="entry name" value="SECA"/>
    <property type="match status" value="1"/>
</dbReference>
<dbReference type="PROSITE" id="PS51196">
    <property type="entry name" value="SECA_MOTOR_DEAD"/>
    <property type="match status" value="1"/>
</dbReference>
<name>SECA_LEGPC</name>
<accession>A5IBV4</accession>
<organism>
    <name type="scientific">Legionella pneumophila (strain Corby)</name>
    <dbReference type="NCBI Taxonomy" id="400673"/>
    <lineage>
        <taxon>Bacteria</taxon>
        <taxon>Pseudomonadati</taxon>
        <taxon>Pseudomonadota</taxon>
        <taxon>Gammaproteobacteria</taxon>
        <taxon>Legionellales</taxon>
        <taxon>Legionellaceae</taxon>
        <taxon>Legionella</taxon>
    </lineage>
</organism>
<evidence type="ECO:0000255" key="1">
    <source>
        <dbReference type="HAMAP-Rule" id="MF_01382"/>
    </source>
</evidence>
<evidence type="ECO:0000256" key="2">
    <source>
        <dbReference type="SAM" id="MobiDB-lite"/>
    </source>
</evidence>
<evidence type="ECO:0000305" key="3"/>
<gene>
    <name evidence="1" type="primary">secA</name>
    <name type="ordered locus">LPC_0878</name>
</gene>
<protein>
    <recommendedName>
        <fullName evidence="1">Protein translocase subunit SecA</fullName>
        <ecNumber evidence="1">7.4.2.8</ecNumber>
    </recommendedName>
</protein>